<sequence>MDKIEVRGARTHNLKNINLVIPRDKLIVVTGLSGSGKSSLAFDTLYAEGQRRYVESLSAYARQFLSLMEKPDVDHIEGLSPAISIEQKSTSHNPRSTVGTITEIHDYLRLLYARVGEPRCPDHDVPLAAQTVSQMVDNVLSQPEGKRLMLLAPIIKERKGEHTKTLENLASQGYIRARIDGEVCDLSDPPKLELQKKHTIEVVVDRFKVRDDLTQRLAESFETALELSGGTAVVADMDDPKAEELLFSANFACPICGYSMRELEPRLFSFNNPAGACPTCDGLGVQQYFDPDRVIQNPELSLAGGAIRGWDRRNFYYFQMLKSLADHYKFDVEAPWGSLSANVHKVVLYGSGKENIEFKYMNDRGDTSIRRHPFEGVLHNMERRYKETESSAVREELAKFISNRPCASCEGTRLRREARHVYVENTPLPAISDMSIGHAMEFFNNLKLAGQRAKIAEKILKEIGDRLKFLVNVGLNYLTLSRSAETLSGGEAQRIRLASQIGAGLVGVMYVLDEPSIGLHQRDNERLLGTLIHLRDLGNTVIVVEHDEDAIRAADHVIDIGPGAGVHGGEVVAEGPLEAIMAVPESLTGQYMSGKRKIEVPKKRVPANPEKVLKLTGARGNNLKDVTLTLPVGLFTCITGVSGSGKSTLINDTLFPIAQRQLNGATIAEPAPYRDIQGLEHFDKVIDIDQSPIGRTPRSNPATYTGVFTPVRELFAGVPESRARGYTPGRFSFNVRGGRCEACQGDGVIKVEMHFLPDIYVPCDQCKGKRYNRETLEIKYKGKTIHEVLDMTIEEAREFFDAVPALARKLQTLMDVGLTYIRLGQSATTLSGGEAQRVKLARELSKRGTGQTLYILDEPTTGLHFADIQQLLDVLHKLRDQGNTIVVIEHNLDVIKTADWIVDLGPEGGSGGGEILVSGTPETVAECEASHTARFLKPML</sequence>
<organism>
    <name type="scientific">Escherichia coli O127:H6 (strain E2348/69 / EPEC)</name>
    <dbReference type="NCBI Taxonomy" id="574521"/>
    <lineage>
        <taxon>Bacteria</taxon>
        <taxon>Pseudomonadati</taxon>
        <taxon>Pseudomonadota</taxon>
        <taxon>Gammaproteobacteria</taxon>
        <taxon>Enterobacterales</taxon>
        <taxon>Enterobacteriaceae</taxon>
        <taxon>Escherichia</taxon>
    </lineage>
</organism>
<feature type="chain" id="PRO_0000456043" description="UvrABC system protein A">
    <location>
        <begin position="1"/>
        <end position="940"/>
    </location>
</feature>
<feature type="domain" description="ABC transporter 1" evidence="1">
    <location>
        <begin position="310"/>
        <end position="587"/>
    </location>
</feature>
<feature type="domain" description="ABC transporter 2" evidence="1">
    <location>
        <begin position="607"/>
        <end position="937"/>
    </location>
</feature>
<feature type="zinc finger region" description="C4-type" evidence="1">
    <location>
        <begin position="253"/>
        <end position="280"/>
    </location>
</feature>
<feature type="zinc finger region" description="C4-type" evidence="1">
    <location>
        <begin position="740"/>
        <end position="766"/>
    </location>
</feature>
<feature type="binding site" evidence="1">
    <location>
        <begin position="31"/>
        <end position="38"/>
    </location>
    <ligand>
        <name>ATP</name>
        <dbReference type="ChEBI" id="CHEBI:30616"/>
    </ligand>
</feature>
<feature type="binding site" evidence="1">
    <location>
        <begin position="640"/>
        <end position="647"/>
    </location>
    <ligand>
        <name>ATP</name>
        <dbReference type="ChEBI" id="CHEBI:30616"/>
    </ligand>
</feature>
<evidence type="ECO:0000255" key="1">
    <source>
        <dbReference type="HAMAP-Rule" id="MF_00205"/>
    </source>
</evidence>
<evidence type="ECO:0000269" key="2">
    <source>
    </source>
</evidence>
<evidence type="ECO:0000312" key="3">
    <source>
        <dbReference type="EMBL" id="CAS11930.1"/>
    </source>
</evidence>
<gene>
    <name evidence="1 3" type="primary">uvrA</name>
    <name evidence="3" type="ordered locus">E2348C_4382</name>
</gene>
<comment type="function">
    <text evidence="1">The UvrABC repair system catalyzes the recognition and processing of DNA lesions. UvrA is an ATPase and a DNA-binding protein. A damage recognition complex composed of 2 UvrA and 2 UvrB subunits scans DNA for abnormalities. When the presence of a lesion has been verified by UvrB, the UvrA molecules dissociate.</text>
</comment>
<comment type="function">
    <text evidence="2">Plays a role in recovery after DNA ADP-ribosylation.</text>
</comment>
<comment type="subunit">
    <text evidence="1">Forms a heterotetramer with UvrB during the search for lesions.</text>
</comment>
<comment type="subcellular location">
    <subcellularLocation>
        <location evidence="1">Cytoplasm</location>
    </subcellularLocation>
</comment>
<comment type="disruption phenotype">
    <text evidence="2">Significantly reduced survival of cells expressing DNA ADP-ribosyl transferase (darT) mutant G49D.</text>
</comment>
<comment type="similarity">
    <text evidence="1">Belongs to the ABC transporter superfamily. UvrA family.</text>
</comment>
<name>UVRA_ECO27</name>
<protein>
    <recommendedName>
        <fullName evidence="1">UvrABC system protein A</fullName>
        <shortName evidence="1">UvrA protein</shortName>
    </recommendedName>
    <alternativeName>
        <fullName evidence="1">Excinuclease ABC subunit A</fullName>
    </alternativeName>
</protein>
<accession>B7UPM7</accession>
<dbReference type="EMBL" id="FM180568">
    <property type="protein sequence ID" value="CAS11930.1"/>
    <property type="molecule type" value="Genomic_DNA"/>
</dbReference>
<dbReference type="RefSeq" id="WP_000357763.1">
    <property type="nucleotide sequence ID" value="NC_011601.1"/>
</dbReference>
<dbReference type="SMR" id="B7UPM7"/>
<dbReference type="GeneID" id="75059255"/>
<dbReference type="KEGG" id="ecg:E2348C_4382"/>
<dbReference type="HOGENOM" id="CLU_001370_0_2_6"/>
<dbReference type="Proteomes" id="UP000008205">
    <property type="component" value="Chromosome"/>
</dbReference>
<dbReference type="GO" id="GO:0005737">
    <property type="term" value="C:cytoplasm"/>
    <property type="evidence" value="ECO:0007669"/>
    <property type="project" value="UniProtKB-SubCell"/>
</dbReference>
<dbReference type="GO" id="GO:0009380">
    <property type="term" value="C:excinuclease repair complex"/>
    <property type="evidence" value="ECO:0007669"/>
    <property type="project" value="InterPro"/>
</dbReference>
<dbReference type="GO" id="GO:0005524">
    <property type="term" value="F:ATP binding"/>
    <property type="evidence" value="ECO:0007669"/>
    <property type="project" value="UniProtKB-UniRule"/>
</dbReference>
<dbReference type="GO" id="GO:0016887">
    <property type="term" value="F:ATP hydrolysis activity"/>
    <property type="evidence" value="ECO:0007669"/>
    <property type="project" value="InterPro"/>
</dbReference>
<dbReference type="GO" id="GO:0003677">
    <property type="term" value="F:DNA binding"/>
    <property type="evidence" value="ECO:0007669"/>
    <property type="project" value="UniProtKB-UniRule"/>
</dbReference>
<dbReference type="GO" id="GO:0009381">
    <property type="term" value="F:excinuclease ABC activity"/>
    <property type="evidence" value="ECO:0007669"/>
    <property type="project" value="UniProtKB-UniRule"/>
</dbReference>
<dbReference type="GO" id="GO:0008270">
    <property type="term" value="F:zinc ion binding"/>
    <property type="evidence" value="ECO:0007669"/>
    <property type="project" value="UniProtKB-UniRule"/>
</dbReference>
<dbReference type="GO" id="GO:0006289">
    <property type="term" value="P:nucleotide-excision repair"/>
    <property type="evidence" value="ECO:0007669"/>
    <property type="project" value="UniProtKB-UniRule"/>
</dbReference>
<dbReference type="GO" id="GO:0009432">
    <property type="term" value="P:SOS response"/>
    <property type="evidence" value="ECO:0007669"/>
    <property type="project" value="UniProtKB-UniRule"/>
</dbReference>
<dbReference type="CDD" id="cd03270">
    <property type="entry name" value="ABC_UvrA_I"/>
    <property type="match status" value="1"/>
</dbReference>
<dbReference type="CDD" id="cd03271">
    <property type="entry name" value="ABC_UvrA_II"/>
    <property type="match status" value="1"/>
</dbReference>
<dbReference type="FunFam" id="1.10.8.280:FF:000001">
    <property type="entry name" value="UvrABC system protein A"/>
    <property type="match status" value="1"/>
</dbReference>
<dbReference type="FunFam" id="1.20.1580.10:FF:000002">
    <property type="entry name" value="UvrABC system protein A"/>
    <property type="match status" value="1"/>
</dbReference>
<dbReference type="FunFam" id="1.20.1580.10:FF:000003">
    <property type="entry name" value="UvrABC system protein A"/>
    <property type="match status" value="1"/>
</dbReference>
<dbReference type="FunFam" id="3.30.190.20:FF:000003">
    <property type="entry name" value="UvrABC system protein A"/>
    <property type="match status" value="1"/>
</dbReference>
<dbReference type="Gene3D" id="1.10.8.280">
    <property type="entry name" value="ABC transporter ATPase domain-like"/>
    <property type="match status" value="1"/>
</dbReference>
<dbReference type="Gene3D" id="1.20.1580.10">
    <property type="entry name" value="ABC transporter ATPase like domain"/>
    <property type="match status" value="2"/>
</dbReference>
<dbReference type="Gene3D" id="3.30.1490.20">
    <property type="entry name" value="ATP-grasp fold, A domain"/>
    <property type="match status" value="1"/>
</dbReference>
<dbReference type="Gene3D" id="3.40.50.300">
    <property type="entry name" value="P-loop containing nucleotide triphosphate hydrolases"/>
    <property type="match status" value="2"/>
</dbReference>
<dbReference type="HAMAP" id="MF_00205">
    <property type="entry name" value="UvrA"/>
    <property type="match status" value="1"/>
</dbReference>
<dbReference type="InterPro" id="IPR003439">
    <property type="entry name" value="ABC_transporter-like_ATP-bd"/>
</dbReference>
<dbReference type="InterPro" id="IPR017871">
    <property type="entry name" value="ABC_transporter-like_CS"/>
</dbReference>
<dbReference type="InterPro" id="IPR013815">
    <property type="entry name" value="ATP_grasp_subdomain_1"/>
</dbReference>
<dbReference type="InterPro" id="IPR027417">
    <property type="entry name" value="P-loop_NTPase"/>
</dbReference>
<dbReference type="InterPro" id="IPR004602">
    <property type="entry name" value="UvrA"/>
</dbReference>
<dbReference type="InterPro" id="IPR041552">
    <property type="entry name" value="UvrA_DNA-bd"/>
</dbReference>
<dbReference type="InterPro" id="IPR041102">
    <property type="entry name" value="UvrA_inter"/>
</dbReference>
<dbReference type="NCBIfam" id="NF001503">
    <property type="entry name" value="PRK00349.1"/>
    <property type="match status" value="1"/>
</dbReference>
<dbReference type="NCBIfam" id="TIGR00630">
    <property type="entry name" value="uvra"/>
    <property type="match status" value="1"/>
</dbReference>
<dbReference type="PANTHER" id="PTHR43152">
    <property type="entry name" value="UVRABC SYSTEM PROTEIN A"/>
    <property type="match status" value="1"/>
</dbReference>
<dbReference type="PANTHER" id="PTHR43152:SF3">
    <property type="entry name" value="UVRABC SYSTEM PROTEIN A"/>
    <property type="match status" value="1"/>
</dbReference>
<dbReference type="Pfam" id="PF00005">
    <property type="entry name" value="ABC_tran"/>
    <property type="match status" value="1"/>
</dbReference>
<dbReference type="Pfam" id="PF17755">
    <property type="entry name" value="UvrA_DNA-bind"/>
    <property type="match status" value="1"/>
</dbReference>
<dbReference type="Pfam" id="PF17760">
    <property type="entry name" value="UvrA_inter"/>
    <property type="match status" value="1"/>
</dbReference>
<dbReference type="SUPFAM" id="SSF52540">
    <property type="entry name" value="P-loop containing nucleoside triphosphate hydrolases"/>
    <property type="match status" value="2"/>
</dbReference>
<dbReference type="PROSITE" id="PS00211">
    <property type="entry name" value="ABC_TRANSPORTER_1"/>
    <property type="match status" value="2"/>
</dbReference>
<dbReference type="PROSITE" id="PS50893">
    <property type="entry name" value="ABC_TRANSPORTER_2"/>
    <property type="match status" value="1"/>
</dbReference>
<keyword id="KW-0067">ATP-binding</keyword>
<keyword id="KW-0963">Cytoplasm</keyword>
<keyword id="KW-0227">DNA damage</keyword>
<keyword id="KW-0228">DNA excision</keyword>
<keyword id="KW-0234">DNA repair</keyword>
<keyword id="KW-0238">DNA-binding</keyword>
<keyword id="KW-0267">Excision nuclease</keyword>
<keyword id="KW-0479">Metal-binding</keyword>
<keyword id="KW-0547">Nucleotide-binding</keyword>
<keyword id="KW-1185">Reference proteome</keyword>
<keyword id="KW-0677">Repeat</keyword>
<keyword id="KW-0742">SOS response</keyword>
<keyword id="KW-0862">Zinc</keyword>
<keyword id="KW-0863">Zinc-finger</keyword>
<proteinExistence type="inferred from homology"/>
<reference evidence="3" key="1">
    <citation type="journal article" date="2009" name="J. Bacteriol.">
        <title>Complete genome sequence and comparative genome analysis of enteropathogenic Escherichia coli O127:H6 strain E2348/69.</title>
        <authorList>
            <person name="Iguchi A."/>
            <person name="Thomson N.R."/>
            <person name="Ogura Y."/>
            <person name="Saunders D."/>
            <person name="Ooka T."/>
            <person name="Henderson I.R."/>
            <person name="Harris D."/>
            <person name="Asadulghani M."/>
            <person name="Kurokawa K."/>
            <person name="Dean P."/>
            <person name="Kenny B."/>
            <person name="Quail M.A."/>
            <person name="Thurston S."/>
            <person name="Dougan G."/>
            <person name="Hayashi T."/>
            <person name="Parkhill J."/>
            <person name="Frankel G."/>
        </authorList>
    </citation>
    <scope>NUCLEOTIDE SEQUENCE [LARGE SCALE GENOMIC DNA]</scope>
    <source>
        <strain>E2348/69 / EPEC</strain>
    </source>
</reference>
<reference key="2">
    <citation type="journal article" date="2020" name="Cell Rep.">
        <title>DNA ADP-Ribosylation Stalls Replication and Is Reversed by RecF-Mediated Homologous Recombination and Nucleotide Excision Repair.</title>
        <authorList>
            <person name="Lawaree E."/>
            <person name="Jankevicius G."/>
            <person name="Cooper C."/>
            <person name="Ahel I."/>
            <person name="Uphoff S."/>
            <person name="Tang C.M."/>
        </authorList>
    </citation>
    <scope>FUNCTION</scope>
    <scope>DISRUPTION PHENOTYPE</scope>
    <source>
        <strain>E2348/69 / EPEC</strain>
    </source>
</reference>